<name>ISCR_SHIF8</name>
<sequence length="162" mass="17337">MRLTSKGRYAVTAMLDVALNSEAGPVPLADISERQGISLSYLEQLFSRLRKNGLVSSVRGPGGGYLLGKDASSIAVGEVISAVDESVDATRCQGKGGCQGGDKCLTHALWRDLSDRLTGFLNNITLGELVNNQEVLDVSGRQHTHDAPRTRTQDAIDVKLRA</sequence>
<comment type="function">
    <text evidence="1">Regulates the transcription of several operons and genes involved in the biogenesis of Fe-S clusters and Fe-S-containing proteins.</text>
</comment>
<comment type="cofactor">
    <cofactor evidence="1">
        <name>[2Fe-2S] cluster</name>
        <dbReference type="ChEBI" id="CHEBI:190135"/>
    </cofactor>
    <text evidence="1">Binds 1 [2Fe-2S] cluster.</text>
</comment>
<organism>
    <name type="scientific">Shigella flexneri serotype 5b (strain 8401)</name>
    <dbReference type="NCBI Taxonomy" id="373384"/>
    <lineage>
        <taxon>Bacteria</taxon>
        <taxon>Pseudomonadati</taxon>
        <taxon>Pseudomonadota</taxon>
        <taxon>Gammaproteobacteria</taxon>
        <taxon>Enterobacterales</taxon>
        <taxon>Enterobacteriaceae</taxon>
        <taxon>Shigella</taxon>
    </lineage>
</organism>
<keyword id="KW-0001">2Fe-2S</keyword>
<keyword id="KW-0010">Activator</keyword>
<keyword id="KW-0238">DNA-binding</keyword>
<keyword id="KW-0408">Iron</keyword>
<keyword id="KW-0411">Iron-sulfur</keyword>
<keyword id="KW-0479">Metal-binding</keyword>
<keyword id="KW-0678">Repressor</keyword>
<keyword id="KW-0804">Transcription</keyword>
<keyword id="KW-0805">Transcription regulation</keyword>
<feature type="chain" id="PRO_1000085425" description="HTH-type transcriptional regulator IscR">
    <location>
        <begin position="1"/>
        <end position="162"/>
    </location>
</feature>
<feature type="domain" description="HTH rrf2-type" evidence="1">
    <location>
        <begin position="2"/>
        <end position="131"/>
    </location>
</feature>
<feature type="DNA-binding region" description="H-T-H motif" evidence="1">
    <location>
        <begin position="28"/>
        <end position="51"/>
    </location>
</feature>
<feature type="region of interest" description="Disordered" evidence="2">
    <location>
        <begin position="140"/>
        <end position="162"/>
    </location>
</feature>
<feature type="compositionally biased region" description="Basic and acidic residues" evidence="2">
    <location>
        <begin position="143"/>
        <end position="162"/>
    </location>
</feature>
<feature type="binding site" evidence="1">
    <location>
        <position position="92"/>
    </location>
    <ligand>
        <name>[2Fe-2S] cluster</name>
        <dbReference type="ChEBI" id="CHEBI:190135"/>
    </ligand>
</feature>
<feature type="binding site" evidence="1">
    <location>
        <position position="98"/>
    </location>
    <ligand>
        <name>[2Fe-2S] cluster</name>
        <dbReference type="ChEBI" id="CHEBI:190135"/>
    </ligand>
</feature>
<feature type="binding site" evidence="1">
    <location>
        <position position="104"/>
    </location>
    <ligand>
        <name>[2Fe-2S] cluster</name>
        <dbReference type="ChEBI" id="CHEBI:190135"/>
    </ligand>
</feature>
<dbReference type="EMBL" id="CP000266">
    <property type="protein sequence ID" value="ABF04677.1"/>
    <property type="molecule type" value="Genomic_DNA"/>
</dbReference>
<dbReference type="RefSeq" id="WP_001241357.1">
    <property type="nucleotide sequence ID" value="NC_008258.1"/>
</dbReference>
<dbReference type="SMR" id="Q0T1Y8"/>
<dbReference type="GeneID" id="86947421"/>
<dbReference type="KEGG" id="sfv:SFV_2579"/>
<dbReference type="HOGENOM" id="CLU_107144_0_0_6"/>
<dbReference type="Proteomes" id="UP000000659">
    <property type="component" value="Chromosome"/>
</dbReference>
<dbReference type="GO" id="GO:0005829">
    <property type="term" value="C:cytosol"/>
    <property type="evidence" value="ECO:0007669"/>
    <property type="project" value="TreeGrafter"/>
</dbReference>
<dbReference type="GO" id="GO:0051537">
    <property type="term" value="F:2 iron, 2 sulfur cluster binding"/>
    <property type="evidence" value="ECO:0007669"/>
    <property type="project" value="UniProtKB-KW"/>
</dbReference>
<dbReference type="GO" id="GO:0003700">
    <property type="term" value="F:DNA-binding transcription factor activity"/>
    <property type="evidence" value="ECO:0007669"/>
    <property type="project" value="UniProtKB-UniRule"/>
</dbReference>
<dbReference type="GO" id="GO:0003690">
    <property type="term" value="F:double-stranded DNA binding"/>
    <property type="evidence" value="ECO:0007669"/>
    <property type="project" value="UniProtKB-UniRule"/>
</dbReference>
<dbReference type="GO" id="GO:0005506">
    <property type="term" value="F:iron ion binding"/>
    <property type="evidence" value="ECO:0007669"/>
    <property type="project" value="UniProtKB-UniRule"/>
</dbReference>
<dbReference type="FunFam" id="1.10.10.10:FF:000026">
    <property type="entry name" value="HTH-type transcriptional regulator IscR"/>
    <property type="match status" value="1"/>
</dbReference>
<dbReference type="Gene3D" id="1.10.10.10">
    <property type="entry name" value="Winged helix-like DNA-binding domain superfamily/Winged helix DNA-binding domain"/>
    <property type="match status" value="1"/>
</dbReference>
<dbReference type="HAMAP" id="MF_01176">
    <property type="entry name" value="HTH_type_IscR"/>
    <property type="match status" value="1"/>
</dbReference>
<dbReference type="InterPro" id="IPR010242">
    <property type="entry name" value="TF_HTH_IscR"/>
</dbReference>
<dbReference type="InterPro" id="IPR030489">
    <property type="entry name" value="TR_Rrf2-type_CS"/>
</dbReference>
<dbReference type="InterPro" id="IPR000944">
    <property type="entry name" value="Tscrpt_reg_Rrf2"/>
</dbReference>
<dbReference type="InterPro" id="IPR036388">
    <property type="entry name" value="WH-like_DNA-bd_sf"/>
</dbReference>
<dbReference type="InterPro" id="IPR036390">
    <property type="entry name" value="WH_DNA-bd_sf"/>
</dbReference>
<dbReference type="NCBIfam" id="TIGR02010">
    <property type="entry name" value="IscR"/>
    <property type="match status" value="1"/>
</dbReference>
<dbReference type="NCBIfam" id="NF008110">
    <property type="entry name" value="PRK10857.1"/>
    <property type="match status" value="1"/>
</dbReference>
<dbReference type="NCBIfam" id="TIGR00738">
    <property type="entry name" value="rrf2_super"/>
    <property type="match status" value="1"/>
</dbReference>
<dbReference type="PANTHER" id="PTHR33221:SF5">
    <property type="entry name" value="HTH-TYPE TRANSCRIPTIONAL REGULATOR ISCR"/>
    <property type="match status" value="1"/>
</dbReference>
<dbReference type="PANTHER" id="PTHR33221">
    <property type="entry name" value="WINGED HELIX-TURN-HELIX TRANSCRIPTIONAL REGULATOR, RRF2 FAMILY"/>
    <property type="match status" value="1"/>
</dbReference>
<dbReference type="Pfam" id="PF02082">
    <property type="entry name" value="Rrf2"/>
    <property type="match status" value="1"/>
</dbReference>
<dbReference type="SUPFAM" id="SSF46785">
    <property type="entry name" value="Winged helix' DNA-binding domain"/>
    <property type="match status" value="1"/>
</dbReference>
<dbReference type="PROSITE" id="PS01332">
    <property type="entry name" value="HTH_RRF2_1"/>
    <property type="match status" value="1"/>
</dbReference>
<dbReference type="PROSITE" id="PS51197">
    <property type="entry name" value="HTH_RRF2_2"/>
    <property type="match status" value="1"/>
</dbReference>
<reference key="1">
    <citation type="journal article" date="2006" name="BMC Genomics">
        <title>Complete genome sequence of Shigella flexneri 5b and comparison with Shigella flexneri 2a.</title>
        <authorList>
            <person name="Nie H."/>
            <person name="Yang F."/>
            <person name="Zhang X."/>
            <person name="Yang J."/>
            <person name="Chen L."/>
            <person name="Wang J."/>
            <person name="Xiong Z."/>
            <person name="Peng J."/>
            <person name="Sun L."/>
            <person name="Dong J."/>
            <person name="Xue Y."/>
            <person name="Xu X."/>
            <person name="Chen S."/>
            <person name="Yao Z."/>
            <person name="Shen Y."/>
            <person name="Jin Q."/>
        </authorList>
    </citation>
    <scope>NUCLEOTIDE SEQUENCE [LARGE SCALE GENOMIC DNA]</scope>
    <source>
        <strain>8401</strain>
    </source>
</reference>
<evidence type="ECO:0000255" key="1">
    <source>
        <dbReference type="HAMAP-Rule" id="MF_01176"/>
    </source>
</evidence>
<evidence type="ECO:0000256" key="2">
    <source>
        <dbReference type="SAM" id="MobiDB-lite"/>
    </source>
</evidence>
<proteinExistence type="inferred from homology"/>
<protein>
    <recommendedName>
        <fullName evidence="1">HTH-type transcriptional regulator IscR</fullName>
    </recommendedName>
</protein>
<accession>Q0T1Y8</accession>
<gene>
    <name evidence="1" type="primary">iscR</name>
    <name type="ordered locus">SFV_2579</name>
</gene>